<dbReference type="EC" id="3.6.5.-" evidence="1"/>
<dbReference type="EMBL" id="BX842656">
    <property type="protein sequence ID" value="CAE81204.1"/>
    <property type="status" value="ALT_INIT"/>
    <property type="molecule type" value="Genomic_DNA"/>
</dbReference>
<dbReference type="RefSeq" id="WP_011166147.1">
    <property type="nucleotide sequence ID" value="NC_005363.1"/>
</dbReference>
<dbReference type="SMR" id="Q6MGS5"/>
<dbReference type="STRING" id="264462.Bd3847"/>
<dbReference type="GeneID" id="93014616"/>
<dbReference type="KEGG" id="bba:Bd3847"/>
<dbReference type="eggNOG" id="COG0536">
    <property type="taxonomic scope" value="Bacteria"/>
</dbReference>
<dbReference type="HOGENOM" id="CLU_011747_2_0_7"/>
<dbReference type="Proteomes" id="UP000008080">
    <property type="component" value="Chromosome"/>
</dbReference>
<dbReference type="GO" id="GO:0005737">
    <property type="term" value="C:cytoplasm"/>
    <property type="evidence" value="ECO:0007669"/>
    <property type="project" value="UniProtKB-SubCell"/>
</dbReference>
<dbReference type="GO" id="GO:0005525">
    <property type="term" value="F:GTP binding"/>
    <property type="evidence" value="ECO:0007669"/>
    <property type="project" value="UniProtKB-UniRule"/>
</dbReference>
<dbReference type="GO" id="GO:0003924">
    <property type="term" value="F:GTPase activity"/>
    <property type="evidence" value="ECO:0007669"/>
    <property type="project" value="UniProtKB-UniRule"/>
</dbReference>
<dbReference type="GO" id="GO:0000287">
    <property type="term" value="F:magnesium ion binding"/>
    <property type="evidence" value="ECO:0007669"/>
    <property type="project" value="InterPro"/>
</dbReference>
<dbReference type="GO" id="GO:0042254">
    <property type="term" value="P:ribosome biogenesis"/>
    <property type="evidence" value="ECO:0007669"/>
    <property type="project" value="UniProtKB-UniRule"/>
</dbReference>
<dbReference type="CDD" id="cd01898">
    <property type="entry name" value="Obg"/>
    <property type="match status" value="1"/>
</dbReference>
<dbReference type="FunFam" id="2.70.210.12:FF:000001">
    <property type="entry name" value="GTPase Obg"/>
    <property type="match status" value="1"/>
</dbReference>
<dbReference type="Gene3D" id="2.70.210.12">
    <property type="entry name" value="GTP1/OBG domain"/>
    <property type="match status" value="1"/>
</dbReference>
<dbReference type="Gene3D" id="3.40.50.300">
    <property type="entry name" value="P-loop containing nucleotide triphosphate hydrolases"/>
    <property type="match status" value="1"/>
</dbReference>
<dbReference type="HAMAP" id="MF_01454">
    <property type="entry name" value="GTPase_Obg"/>
    <property type="match status" value="1"/>
</dbReference>
<dbReference type="InterPro" id="IPR031167">
    <property type="entry name" value="G_OBG"/>
</dbReference>
<dbReference type="InterPro" id="IPR006073">
    <property type="entry name" value="GTP-bd"/>
</dbReference>
<dbReference type="InterPro" id="IPR014100">
    <property type="entry name" value="GTP-bd_Obg/CgtA"/>
</dbReference>
<dbReference type="InterPro" id="IPR006074">
    <property type="entry name" value="GTP1-OBG_CS"/>
</dbReference>
<dbReference type="InterPro" id="IPR006169">
    <property type="entry name" value="GTP1_OBG_dom"/>
</dbReference>
<dbReference type="InterPro" id="IPR036726">
    <property type="entry name" value="GTP1_OBG_dom_sf"/>
</dbReference>
<dbReference type="InterPro" id="IPR045086">
    <property type="entry name" value="OBG_GTPase"/>
</dbReference>
<dbReference type="InterPro" id="IPR027417">
    <property type="entry name" value="P-loop_NTPase"/>
</dbReference>
<dbReference type="NCBIfam" id="TIGR02729">
    <property type="entry name" value="Obg_CgtA"/>
    <property type="match status" value="1"/>
</dbReference>
<dbReference type="NCBIfam" id="NF008954">
    <property type="entry name" value="PRK12296.1"/>
    <property type="match status" value="1"/>
</dbReference>
<dbReference type="NCBIfam" id="NF008955">
    <property type="entry name" value="PRK12297.1"/>
    <property type="match status" value="1"/>
</dbReference>
<dbReference type="NCBIfam" id="NF008956">
    <property type="entry name" value="PRK12299.1"/>
    <property type="match status" value="1"/>
</dbReference>
<dbReference type="PANTHER" id="PTHR11702">
    <property type="entry name" value="DEVELOPMENTALLY REGULATED GTP-BINDING PROTEIN-RELATED"/>
    <property type="match status" value="1"/>
</dbReference>
<dbReference type="PANTHER" id="PTHR11702:SF31">
    <property type="entry name" value="MITOCHONDRIAL RIBOSOME-ASSOCIATED GTPASE 2"/>
    <property type="match status" value="1"/>
</dbReference>
<dbReference type="Pfam" id="PF01018">
    <property type="entry name" value="GTP1_OBG"/>
    <property type="match status" value="1"/>
</dbReference>
<dbReference type="Pfam" id="PF01926">
    <property type="entry name" value="MMR_HSR1"/>
    <property type="match status" value="1"/>
</dbReference>
<dbReference type="PIRSF" id="PIRSF002401">
    <property type="entry name" value="GTP_bd_Obg/CgtA"/>
    <property type="match status" value="1"/>
</dbReference>
<dbReference type="PRINTS" id="PR00326">
    <property type="entry name" value="GTP1OBG"/>
</dbReference>
<dbReference type="SUPFAM" id="SSF82051">
    <property type="entry name" value="Obg GTP-binding protein N-terminal domain"/>
    <property type="match status" value="1"/>
</dbReference>
<dbReference type="SUPFAM" id="SSF52540">
    <property type="entry name" value="P-loop containing nucleoside triphosphate hydrolases"/>
    <property type="match status" value="1"/>
</dbReference>
<dbReference type="PROSITE" id="PS51710">
    <property type="entry name" value="G_OBG"/>
    <property type="match status" value="1"/>
</dbReference>
<dbReference type="PROSITE" id="PS00905">
    <property type="entry name" value="GTP1_OBG"/>
    <property type="match status" value="1"/>
</dbReference>
<dbReference type="PROSITE" id="PS51883">
    <property type="entry name" value="OBG"/>
    <property type="match status" value="1"/>
</dbReference>
<gene>
    <name evidence="1" type="primary">obg</name>
    <name type="ordered locus">Bd3847</name>
</gene>
<evidence type="ECO:0000255" key="1">
    <source>
        <dbReference type="HAMAP-Rule" id="MF_01454"/>
    </source>
</evidence>
<evidence type="ECO:0000255" key="2">
    <source>
        <dbReference type="PROSITE-ProRule" id="PRU01231"/>
    </source>
</evidence>
<evidence type="ECO:0000256" key="3">
    <source>
        <dbReference type="SAM" id="MobiDB-lite"/>
    </source>
</evidence>
<evidence type="ECO:0000305" key="4"/>
<reference key="1">
    <citation type="journal article" date="2004" name="Science">
        <title>A predator unmasked: life cycle of Bdellovibrio bacteriovorus from a genomic perspective.</title>
        <authorList>
            <person name="Rendulic S."/>
            <person name="Jagtap P."/>
            <person name="Rosinus A."/>
            <person name="Eppinger M."/>
            <person name="Baar C."/>
            <person name="Lanz C."/>
            <person name="Keller H."/>
            <person name="Lambert C."/>
            <person name="Evans K.J."/>
            <person name="Goesmann A."/>
            <person name="Meyer F."/>
            <person name="Sockett R.E."/>
            <person name="Schuster S.C."/>
        </authorList>
    </citation>
    <scope>NUCLEOTIDE SEQUENCE [LARGE SCALE GENOMIC DNA]</scope>
    <source>
        <strain>ATCC 15356 / DSM 50701 / NCIMB 9529 / HD100</strain>
    </source>
</reference>
<protein>
    <recommendedName>
        <fullName evidence="1">GTPase Obg</fullName>
        <ecNumber evidence="1">3.6.5.-</ecNumber>
    </recommendedName>
    <alternativeName>
        <fullName evidence="1">GTP-binding protein Obg</fullName>
    </alternativeName>
</protein>
<comment type="function">
    <text evidence="1">An essential GTPase which binds GTP, GDP and possibly (p)ppGpp with moderate affinity, with high nucleotide exchange rates and a fairly low GTP hydrolysis rate. Plays a role in control of the cell cycle, stress response, ribosome biogenesis and in those bacteria that undergo differentiation, in morphogenesis control.</text>
</comment>
<comment type="cofactor">
    <cofactor evidence="1">
        <name>Mg(2+)</name>
        <dbReference type="ChEBI" id="CHEBI:18420"/>
    </cofactor>
</comment>
<comment type="subunit">
    <text evidence="1">Monomer.</text>
</comment>
<comment type="subcellular location">
    <subcellularLocation>
        <location evidence="1">Cytoplasm</location>
    </subcellularLocation>
</comment>
<comment type="similarity">
    <text evidence="1">Belongs to the TRAFAC class OBG-HflX-like GTPase superfamily. OBG GTPase family.</text>
</comment>
<comment type="sequence caution" evidence="4">
    <conflict type="erroneous initiation">
        <sequence resource="EMBL-CDS" id="CAE81204"/>
    </conflict>
    <text>Extended N-terminus.</text>
</comment>
<accession>Q6MGS5</accession>
<organism>
    <name type="scientific">Bdellovibrio bacteriovorus (strain ATCC 15356 / DSM 50701 / NCIMB 9529 / HD100)</name>
    <dbReference type="NCBI Taxonomy" id="264462"/>
    <lineage>
        <taxon>Bacteria</taxon>
        <taxon>Pseudomonadati</taxon>
        <taxon>Bdellovibrionota</taxon>
        <taxon>Bdellovibrionia</taxon>
        <taxon>Bdellovibrionales</taxon>
        <taxon>Pseudobdellovibrionaceae</taxon>
        <taxon>Bdellovibrio</taxon>
    </lineage>
</organism>
<sequence length="343" mass="37270">MKFIDEVSISLASGRGGPGCVSFRRESMQARGGPDGGNGGKGGDVIIRTSRHINSLVDIRQNKRYAAQSGRMGEGRQKSGMDGEDLILIVPQGTVFRNMDGEIIIDMTGISEHTLLKGGRGGKGNEFFKNSVNQAPEHAQPGEEGQEIEVRLELKLIADVGIVGFPNAGKSTLISRISAARPKIADYPFTTLTPNLGVVKAGDYSSFVVADIPGLVKGAHAGVGLGIQFLKHIERTRLFIHLVDASGMSGRDPLEDYTDINNELKMYDENNQDKEGFFPLSTRPQLVVLNKIDTLSESQLTKLKKQFKEASGSEPFAISAVTGKNIKEFVQELARQILKEEEE</sequence>
<feature type="chain" id="PRO_0000385740" description="GTPase Obg">
    <location>
        <begin position="1"/>
        <end position="343"/>
    </location>
</feature>
<feature type="domain" description="Obg" evidence="2">
    <location>
        <begin position="1"/>
        <end position="157"/>
    </location>
</feature>
<feature type="domain" description="OBG-type G" evidence="1">
    <location>
        <begin position="158"/>
        <end position="338"/>
    </location>
</feature>
<feature type="region of interest" description="Disordered" evidence="3">
    <location>
        <begin position="13"/>
        <end position="44"/>
    </location>
</feature>
<feature type="compositionally biased region" description="Gly residues" evidence="3">
    <location>
        <begin position="33"/>
        <end position="43"/>
    </location>
</feature>
<feature type="binding site" evidence="1">
    <location>
        <begin position="164"/>
        <end position="171"/>
    </location>
    <ligand>
        <name>GTP</name>
        <dbReference type="ChEBI" id="CHEBI:37565"/>
    </ligand>
</feature>
<feature type="binding site" evidence="1">
    <location>
        <position position="171"/>
    </location>
    <ligand>
        <name>Mg(2+)</name>
        <dbReference type="ChEBI" id="CHEBI:18420"/>
    </ligand>
</feature>
<feature type="binding site" evidence="1">
    <location>
        <begin position="189"/>
        <end position="193"/>
    </location>
    <ligand>
        <name>GTP</name>
        <dbReference type="ChEBI" id="CHEBI:37565"/>
    </ligand>
</feature>
<feature type="binding site" evidence="1">
    <location>
        <position position="191"/>
    </location>
    <ligand>
        <name>Mg(2+)</name>
        <dbReference type="ChEBI" id="CHEBI:18420"/>
    </ligand>
</feature>
<feature type="binding site" evidence="1">
    <location>
        <begin position="211"/>
        <end position="214"/>
    </location>
    <ligand>
        <name>GTP</name>
        <dbReference type="ChEBI" id="CHEBI:37565"/>
    </ligand>
</feature>
<feature type="binding site" evidence="1">
    <location>
        <begin position="290"/>
        <end position="293"/>
    </location>
    <ligand>
        <name>GTP</name>
        <dbReference type="ChEBI" id="CHEBI:37565"/>
    </ligand>
</feature>
<feature type="binding site" evidence="1">
    <location>
        <begin position="319"/>
        <end position="321"/>
    </location>
    <ligand>
        <name>GTP</name>
        <dbReference type="ChEBI" id="CHEBI:37565"/>
    </ligand>
</feature>
<name>OBG_BDEBA</name>
<keyword id="KW-0963">Cytoplasm</keyword>
<keyword id="KW-0342">GTP-binding</keyword>
<keyword id="KW-0378">Hydrolase</keyword>
<keyword id="KW-0460">Magnesium</keyword>
<keyword id="KW-0479">Metal-binding</keyword>
<keyword id="KW-0547">Nucleotide-binding</keyword>
<keyword id="KW-1185">Reference proteome</keyword>
<proteinExistence type="inferred from homology"/>